<gene>
    <name evidence="1" type="primary">nuoH</name>
    <name type="ordered locus">Bcen2424_2242</name>
</gene>
<dbReference type="EC" id="7.1.1.-" evidence="1"/>
<dbReference type="EMBL" id="CP000458">
    <property type="protein sequence ID" value="ABK08993.1"/>
    <property type="molecule type" value="Genomic_DNA"/>
</dbReference>
<dbReference type="RefSeq" id="WP_006478269.1">
    <property type="nucleotide sequence ID" value="NC_008542.1"/>
</dbReference>
<dbReference type="SMR" id="A0K916"/>
<dbReference type="GeneID" id="83049054"/>
<dbReference type="KEGG" id="bch:Bcen2424_2242"/>
<dbReference type="HOGENOM" id="CLU_015134_0_1_4"/>
<dbReference type="GO" id="GO:0005886">
    <property type="term" value="C:plasma membrane"/>
    <property type="evidence" value="ECO:0007669"/>
    <property type="project" value="UniProtKB-SubCell"/>
</dbReference>
<dbReference type="GO" id="GO:0003954">
    <property type="term" value="F:NADH dehydrogenase activity"/>
    <property type="evidence" value="ECO:0007669"/>
    <property type="project" value="TreeGrafter"/>
</dbReference>
<dbReference type="GO" id="GO:0016655">
    <property type="term" value="F:oxidoreductase activity, acting on NAD(P)H, quinone or similar compound as acceptor"/>
    <property type="evidence" value="ECO:0007669"/>
    <property type="project" value="UniProtKB-UniRule"/>
</dbReference>
<dbReference type="GO" id="GO:0048038">
    <property type="term" value="F:quinone binding"/>
    <property type="evidence" value="ECO:0007669"/>
    <property type="project" value="UniProtKB-KW"/>
</dbReference>
<dbReference type="GO" id="GO:0009060">
    <property type="term" value="P:aerobic respiration"/>
    <property type="evidence" value="ECO:0007669"/>
    <property type="project" value="TreeGrafter"/>
</dbReference>
<dbReference type="HAMAP" id="MF_01350">
    <property type="entry name" value="NDH1_NuoH"/>
    <property type="match status" value="1"/>
</dbReference>
<dbReference type="InterPro" id="IPR001694">
    <property type="entry name" value="NADH_UbQ_OxRdtase_su1/FPO"/>
</dbReference>
<dbReference type="InterPro" id="IPR018086">
    <property type="entry name" value="NADH_UbQ_OxRdtase_su1_CS"/>
</dbReference>
<dbReference type="NCBIfam" id="NF004741">
    <property type="entry name" value="PRK06076.1-2"/>
    <property type="match status" value="1"/>
</dbReference>
<dbReference type="NCBIfam" id="NF004742">
    <property type="entry name" value="PRK06076.1-3"/>
    <property type="match status" value="1"/>
</dbReference>
<dbReference type="PANTHER" id="PTHR11432">
    <property type="entry name" value="NADH DEHYDROGENASE SUBUNIT 1"/>
    <property type="match status" value="1"/>
</dbReference>
<dbReference type="PANTHER" id="PTHR11432:SF3">
    <property type="entry name" value="NADH-UBIQUINONE OXIDOREDUCTASE CHAIN 1"/>
    <property type="match status" value="1"/>
</dbReference>
<dbReference type="Pfam" id="PF00146">
    <property type="entry name" value="NADHdh"/>
    <property type="match status" value="1"/>
</dbReference>
<dbReference type="PROSITE" id="PS00668">
    <property type="entry name" value="COMPLEX1_ND1_2"/>
    <property type="match status" value="1"/>
</dbReference>
<protein>
    <recommendedName>
        <fullName evidence="1">NADH-quinone oxidoreductase subunit H</fullName>
        <ecNumber evidence="1">7.1.1.-</ecNumber>
    </recommendedName>
    <alternativeName>
        <fullName evidence="1">NADH dehydrogenase I subunit H</fullName>
    </alternativeName>
    <alternativeName>
        <fullName evidence="1">NDH-1 subunit H</fullName>
    </alternativeName>
</protein>
<reference key="1">
    <citation type="submission" date="2006-08" db="EMBL/GenBank/DDBJ databases">
        <title>Complete sequence of chromosome 1 of Burkholderia cenocepacia HI2424.</title>
        <authorList>
            <person name="Copeland A."/>
            <person name="Lucas S."/>
            <person name="Lapidus A."/>
            <person name="Barry K."/>
            <person name="Detter J.C."/>
            <person name="Glavina del Rio T."/>
            <person name="Hammon N."/>
            <person name="Israni S."/>
            <person name="Pitluck S."/>
            <person name="Chain P."/>
            <person name="Malfatti S."/>
            <person name="Shin M."/>
            <person name="Vergez L."/>
            <person name="Schmutz J."/>
            <person name="Larimer F."/>
            <person name="Land M."/>
            <person name="Hauser L."/>
            <person name="Kyrpides N."/>
            <person name="Kim E."/>
            <person name="LiPuma J.J."/>
            <person name="Gonzalez C.F."/>
            <person name="Konstantinidis K."/>
            <person name="Tiedje J.M."/>
            <person name="Richardson P."/>
        </authorList>
    </citation>
    <scope>NUCLEOTIDE SEQUENCE [LARGE SCALE GENOMIC DNA]</scope>
    <source>
        <strain>HI2424</strain>
    </source>
</reference>
<sequence length="355" mass="39260">MSLFDTINAGGAELLGFAWPTVWAVVRILVVSVVILLCVAYLILWERKLIGWMHVRLGPNRVGPGGLLQPIADVLKLLLKEVIQPSAASRWLYLIAPVMTVVPAFAVWAVIPFQAEAVLANVNAGLLYAMAISSIGVYAVILAGWASNSKYAFLGAMRAAAQMVSYEISMGFALVLVLMTAGSLNLSEIVGSQQHGFFAGHGVNFLSWNWLPLLPAFVVYFISGIAETNRHPFDVVEGESEIVAGHMIDYSGMAFALFFLAEYINMIVISALAATLFLGGWDAPFEFLSFIPGIFWLVLKVFALLSVFIWVRATFPRYRYDQIMRLGWKVFLPVTVVWVIVVGFWMMSPLNIWVK</sequence>
<evidence type="ECO:0000255" key="1">
    <source>
        <dbReference type="HAMAP-Rule" id="MF_01350"/>
    </source>
</evidence>
<keyword id="KW-0997">Cell inner membrane</keyword>
<keyword id="KW-1003">Cell membrane</keyword>
<keyword id="KW-0472">Membrane</keyword>
<keyword id="KW-0520">NAD</keyword>
<keyword id="KW-0874">Quinone</keyword>
<keyword id="KW-1278">Translocase</keyword>
<keyword id="KW-0812">Transmembrane</keyword>
<keyword id="KW-1133">Transmembrane helix</keyword>
<keyword id="KW-0830">Ubiquinone</keyword>
<feature type="chain" id="PRO_0000298799" description="NADH-quinone oxidoreductase subunit H">
    <location>
        <begin position="1"/>
        <end position="355"/>
    </location>
</feature>
<feature type="transmembrane region" description="Helical" evidence="1">
    <location>
        <begin position="25"/>
        <end position="45"/>
    </location>
</feature>
<feature type="transmembrane region" description="Helical" evidence="1">
    <location>
        <begin position="91"/>
        <end position="111"/>
    </location>
</feature>
<feature type="transmembrane region" description="Helical" evidence="1">
    <location>
        <begin position="126"/>
        <end position="146"/>
    </location>
</feature>
<feature type="transmembrane region" description="Helical" evidence="1">
    <location>
        <begin position="170"/>
        <end position="190"/>
    </location>
</feature>
<feature type="transmembrane region" description="Helical" evidence="1">
    <location>
        <begin position="205"/>
        <end position="225"/>
    </location>
</feature>
<feature type="transmembrane region" description="Helical" evidence="1">
    <location>
        <begin position="253"/>
        <end position="273"/>
    </location>
</feature>
<feature type="transmembrane region" description="Helical" evidence="1">
    <location>
        <begin position="290"/>
        <end position="310"/>
    </location>
</feature>
<feature type="transmembrane region" description="Helical" evidence="1">
    <location>
        <begin position="330"/>
        <end position="350"/>
    </location>
</feature>
<organism>
    <name type="scientific">Burkholderia cenocepacia (strain HI2424)</name>
    <dbReference type="NCBI Taxonomy" id="331272"/>
    <lineage>
        <taxon>Bacteria</taxon>
        <taxon>Pseudomonadati</taxon>
        <taxon>Pseudomonadota</taxon>
        <taxon>Betaproteobacteria</taxon>
        <taxon>Burkholderiales</taxon>
        <taxon>Burkholderiaceae</taxon>
        <taxon>Burkholderia</taxon>
        <taxon>Burkholderia cepacia complex</taxon>
    </lineage>
</organism>
<name>NUOH_BURCH</name>
<proteinExistence type="inferred from homology"/>
<accession>A0K916</accession>
<comment type="function">
    <text evidence="1">NDH-1 shuttles electrons from NADH, via FMN and iron-sulfur (Fe-S) centers, to quinones in the respiratory chain. The immediate electron acceptor for the enzyme in this species is believed to be ubiquinone. Couples the redox reaction to proton translocation (for every two electrons transferred, four hydrogen ions are translocated across the cytoplasmic membrane), and thus conserves the redox energy in a proton gradient. This subunit may bind ubiquinone.</text>
</comment>
<comment type="catalytic activity">
    <reaction evidence="1">
        <text>a quinone + NADH + 5 H(+)(in) = a quinol + NAD(+) + 4 H(+)(out)</text>
        <dbReference type="Rhea" id="RHEA:57888"/>
        <dbReference type="ChEBI" id="CHEBI:15378"/>
        <dbReference type="ChEBI" id="CHEBI:24646"/>
        <dbReference type="ChEBI" id="CHEBI:57540"/>
        <dbReference type="ChEBI" id="CHEBI:57945"/>
        <dbReference type="ChEBI" id="CHEBI:132124"/>
    </reaction>
</comment>
<comment type="subunit">
    <text evidence="1">NDH-1 is composed of 14 different subunits. Subunits NuoA, H, J, K, L, M, N constitute the membrane sector of the complex.</text>
</comment>
<comment type="subcellular location">
    <subcellularLocation>
        <location evidence="1">Cell inner membrane</location>
        <topology evidence="1">Multi-pass membrane protein</topology>
    </subcellularLocation>
</comment>
<comment type="similarity">
    <text evidence="1">Belongs to the complex I subunit 1 family.</text>
</comment>